<comment type="subcellular location">
    <subcellularLocation>
        <location evidence="2">Cell membrane</location>
        <topology evidence="2">Lipid-anchor</topology>
    </subcellularLocation>
</comment>
<accession>Q58288</accession>
<organism>
    <name type="scientific">Methanocaldococcus jannaschii (strain ATCC 43067 / DSM 2661 / JAL-1 / JCM 10045 / NBRC 100440)</name>
    <name type="common">Methanococcus jannaschii</name>
    <dbReference type="NCBI Taxonomy" id="243232"/>
    <lineage>
        <taxon>Archaea</taxon>
        <taxon>Methanobacteriati</taxon>
        <taxon>Methanobacteriota</taxon>
        <taxon>Methanomada group</taxon>
        <taxon>Methanococci</taxon>
        <taxon>Methanococcales</taxon>
        <taxon>Methanocaldococcaceae</taxon>
        <taxon>Methanocaldococcus</taxon>
    </lineage>
</organism>
<protein>
    <recommendedName>
        <fullName>Uncharacterized lipoprotein MJ0878</fullName>
    </recommendedName>
</protein>
<gene>
    <name type="ordered locus">MJ0878</name>
</gene>
<keyword id="KW-1003">Cell membrane</keyword>
<keyword id="KW-0449">Lipoprotein</keyword>
<keyword id="KW-0472">Membrane</keyword>
<keyword id="KW-1185">Reference proteome</keyword>
<keyword id="KW-0732">Signal</keyword>
<evidence type="ECO:0000255" key="1"/>
<evidence type="ECO:0000255" key="2">
    <source>
        <dbReference type="PROSITE-ProRule" id="PRU00303"/>
    </source>
</evidence>
<evidence type="ECO:0000255" key="3">
    <source>
        <dbReference type="PROSITE-ProRule" id="PRU00344"/>
    </source>
</evidence>
<name>Y878_METJA</name>
<sequence>MKKLLAIGILCIMVTAVMSGCVSEKEININNSNKITTNMPVSEKNITKILKYAKNMNLIYYDENGNIVNPYNGDKWKYKVFIDATGQKFLLKNKDDPVPSWAKEKLGDNFKVINVPLTRVIVMSSTEIALMEAINDDGSVIGSVKGIMWGKSYKWYFKDINKSLAEGKIIDVGSSSNPNWDKIIEINPQVIFVYPGYDGDKIIAKCKELGITYVADAEYLENDPLGRCEWVKMFAAFYNKEPEAKRYFEKVEDNCLKVINKTKNCPKVTVAWGYNSQWGCYVPENNSYVAKEIMFYCNGDYIFKDLNGTGSAKINYETFAERAKDADVWVVPSSTAWLSTFKEDNPGYETFKAVKNGRVFCESDDYWQLGLLKTDEVIMDLATILHPEAFKGRKTHFFLKYNIENNTATPFIAK</sequence>
<dbReference type="EMBL" id="L77117">
    <property type="protein sequence ID" value="AAB98893.1"/>
    <property type="molecule type" value="Genomic_DNA"/>
</dbReference>
<dbReference type="PIR" id="F64409">
    <property type="entry name" value="F64409"/>
</dbReference>
<dbReference type="RefSeq" id="WP_010870392.1">
    <property type="nucleotide sequence ID" value="NC_000909.1"/>
</dbReference>
<dbReference type="SMR" id="Q58288"/>
<dbReference type="FunCoup" id="Q58288">
    <property type="interactions" value="3"/>
</dbReference>
<dbReference type="STRING" id="243232.MJ_0878"/>
<dbReference type="PaxDb" id="243232-MJ_0878"/>
<dbReference type="EnsemblBacteria" id="AAB98893">
    <property type="protein sequence ID" value="AAB98893"/>
    <property type="gene ID" value="MJ_0878"/>
</dbReference>
<dbReference type="GeneID" id="1451767"/>
<dbReference type="KEGG" id="mja:MJ_0878"/>
<dbReference type="eggNOG" id="arCOG03417">
    <property type="taxonomic scope" value="Archaea"/>
</dbReference>
<dbReference type="HOGENOM" id="CLU_025776_0_0_2"/>
<dbReference type="InParanoid" id="Q58288"/>
<dbReference type="OrthoDB" id="24039at2157"/>
<dbReference type="PhylomeDB" id="Q58288"/>
<dbReference type="Proteomes" id="UP000000805">
    <property type="component" value="Chromosome"/>
</dbReference>
<dbReference type="GO" id="GO:0005886">
    <property type="term" value="C:plasma membrane"/>
    <property type="evidence" value="ECO:0007669"/>
    <property type="project" value="UniProtKB-SubCell"/>
</dbReference>
<dbReference type="Gene3D" id="3.40.50.1980">
    <property type="entry name" value="Nitrogenase molybdenum iron protein domain"/>
    <property type="match status" value="2"/>
</dbReference>
<dbReference type="InterPro" id="IPR050902">
    <property type="entry name" value="ABC_Transporter_SBP"/>
</dbReference>
<dbReference type="InterPro" id="IPR002491">
    <property type="entry name" value="ABC_transptr_periplasmic_BD"/>
</dbReference>
<dbReference type="PANTHER" id="PTHR30535:SF34">
    <property type="entry name" value="MOLYBDATE-BINDING PROTEIN MOLA"/>
    <property type="match status" value="1"/>
</dbReference>
<dbReference type="PANTHER" id="PTHR30535">
    <property type="entry name" value="VITAMIN B12-BINDING PROTEIN"/>
    <property type="match status" value="1"/>
</dbReference>
<dbReference type="Pfam" id="PF01497">
    <property type="entry name" value="Peripla_BP_2"/>
    <property type="match status" value="1"/>
</dbReference>
<dbReference type="SUPFAM" id="SSF53807">
    <property type="entry name" value="Helical backbone' metal receptor"/>
    <property type="match status" value="1"/>
</dbReference>
<dbReference type="PROSITE" id="PS50983">
    <property type="entry name" value="FE_B12_PBP"/>
    <property type="match status" value="1"/>
</dbReference>
<dbReference type="PROSITE" id="PS51257">
    <property type="entry name" value="PROKAR_LIPOPROTEIN"/>
    <property type="match status" value="1"/>
</dbReference>
<feature type="signal peptide" evidence="2">
    <location>
        <begin position="1"/>
        <end position="20"/>
    </location>
</feature>
<feature type="chain" id="PRO_0000014005" description="Uncharacterized lipoprotein MJ0878">
    <location>
        <begin position="21"/>
        <end position="414"/>
    </location>
</feature>
<feature type="domain" description="Fe/B12 periplasmic-binding" evidence="3">
    <location>
        <begin position="119"/>
        <end position="389"/>
    </location>
</feature>
<feature type="lipid moiety-binding region" description="S-archaeol cysteine" evidence="1">
    <location>
        <position position="21"/>
    </location>
</feature>
<reference key="1">
    <citation type="journal article" date="1996" name="Science">
        <title>Complete genome sequence of the methanogenic archaeon, Methanococcus jannaschii.</title>
        <authorList>
            <person name="Bult C.J."/>
            <person name="White O."/>
            <person name="Olsen G.J."/>
            <person name="Zhou L."/>
            <person name="Fleischmann R.D."/>
            <person name="Sutton G.G."/>
            <person name="Blake J.A."/>
            <person name="FitzGerald L.M."/>
            <person name="Clayton R.A."/>
            <person name="Gocayne J.D."/>
            <person name="Kerlavage A.R."/>
            <person name="Dougherty B.A."/>
            <person name="Tomb J.-F."/>
            <person name="Adams M.D."/>
            <person name="Reich C.I."/>
            <person name="Overbeek R."/>
            <person name="Kirkness E.F."/>
            <person name="Weinstock K.G."/>
            <person name="Merrick J.M."/>
            <person name="Glodek A."/>
            <person name="Scott J.L."/>
            <person name="Geoghagen N.S.M."/>
            <person name="Weidman J.F."/>
            <person name="Fuhrmann J.L."/>
            <person name="Nguyen D."/>
            <person name="Utterback T.R."/>
            <person name="Kelley J.M."/>
            <person name="Peterson J.D."/>
            <person name="Sadow P.W."/>
            <person name="Hanna M.C."/>
            <person name="Cotton M.D."/>
            <person name="Roberts K.M."/>
            <person name="Hurst M.A."/>
            <person name="Kaine B.P."/>
            <person name="Borodovsky M."/>
            <person name="Klenk H.-P."/>
            <person name="Fraser C.M."/>
            <person name="Smith H.O."/>
            <person name="Woese C.R."/>
            <person name="Venter J.C."/>
        </authorList>
    </citation>
    <scope>NUCLEOTIDE SEQUENCE [LARGE SCALE GENOMIC DNA]</scope>
    <source>
        <strain>ATCC 43067 / DSM 2661 / JAL-1 / JCM 10045 / NBRC 100440</strain>
    </source>
</reference>
<proteinExistence type="inferred from homology"/>